<evidence type="ECO:0000255" key="1">
    <source>
        <dbReference type="HAMAP-Rule" id="MF_00739"/>
    </source>
</evidence>
<evidence type="ECO:0000305" key="2"/>
<feature type="chain" id="PRO_0000098011" description="Urease subunit gamma">
    <location>
        <begin position="1"/>
        <end position="100"/>
    </location>
</feature>
<gene>
    <name evidence="1" type="primary">ureA1</name>
    <name type="ordered locus">Z1143</name>
    <name type="ordered locus">ECs1322</name>
</gene>
<gene>
    <name evidence="1" type="primary">ureA2</name>
    <name type="ordered locus">Z1582</name>
</gene>
<name>URE3_ECO57</name>
<dbReference type="EC" id="3.5.1.5" evidence="1"/>
<dbReference type="EMBL" id="AE005174">
    <property type="protein sequence ID" value="AAG55288.1"/>
    <property type="molecule type" value="Genomic_DNA"/>
</dbReference>
<dbReference type="EMBL" id="AE005174">
    <property type="protein sequence ID" value="AAG55697.1"/>
    <property type="molecule type" value="Genomic_DNA"/>
</dbReference>
<dbReference type="EMBL" id="BA000007">
    <property type="protein sequence ID" value="BAB34745.1"/>
    <property type="molecule type" value="Genomic_DNA"/>
</dbReference>
<dbReference type="PIR" id="B90794">
    <property type="entry name" value="B90794"/>
</dbReference>
<dbReference type="PIR" id="D85603">
    <property type="entry name" value="D85603"/>
</dbReference>
<dbReference type="RefSeq" id="WP_000424145.1">
    <property type="nucleotide sequence ID" value="NZ_VOAI01000029.1"/>
</dbReference>
<dbReference type="SMR" id="Q8XAG2"/>
<dbReference type="STRING" id="155864.Z1143"/>
<dbReference type="KEGG" id="ece:Z1143"/>
<dbReference type="KEGG" id="ece:Z1582"/>
<dbReference type="KEGG" id="ecs:ECs_1322"/>
<dbReference type="PATRIC" id="fig|386585.9.peg.1427"/>
<dbReference type="eggNOG" id="COG0831">
    <property type="taxonomic scope" value="Bacteria"/>
</dbReference>
<dbReference type="HOGENOM" id="CLU_145825_1_0_6"/>
<dbReference type="OMA" id="MQLTPHE"/>
<dbReference type="UniPathway" id="UPA00258">
    <property type="reaction ID" value="UER00370"/>
</dbReference>
<dbReference type="Proteomes" id="UP000000558">
    <property type="component" value="Chromosome"/>
</dbReference>
<dbReference type="Proteomes" id="UP000002519">
    <property type="component" value="Chromosome"/>
</dbReference>
<dbReference type="GO" id="GO:0005737">
    <property type="term" value="C:cytoplasm"/>
    <property type="evidence" value="ECO:0007669"/>
    <property type="project" value="UniProtKB-SubCell"/>
</dbReference>
<dbReference type="GO" id="GO:0016151">
    <property type="term" value="F:nickel cation binding"/>
    <property type="evidence" value="ECO:0007669"/>
    <property type="project" value="InterPro"/>
</dbReference>
<dbReference type="GO" id="GO:0009039">
    <property type="term" value="F:urease activity"/>
    <property type="evidence" value="ECO:0007669"/>
    <property type="project" value="UniProtKB-UniRule"/>
</dbReference>
<dbReference type="GO" id="GO:0043419">
    <property type="term" value="P:urea catabolic process"/>
    <property type="evidence" value="ECO:0007669"/>
    <property type="project" value="UniProtKB-UniRule"/>
</dbReference>
<dbReference type="CDD" id="cd00390">
    <property type="entry name" value="Urease_gamma"/>
    <property type="match status" value="1"/>
</dbReference>
<dbReference type="Gene3D" id="3.30.280.10">
    <property type="entry name" value="Urease, gamma-like subunit"/>
    <property type="match status" value="1"/>
</dbReference>
<dbReference type="HAMAP" id="MF_00739">
    <property type="entry name" value="Urease_gamma"/>
    <property type="match status" value="1"/>
</dbReference>
<dbReference type="InterPro" id="IPR012010">
    <property type="entry name" value="Urease_gamma"/>
</dbReference>
<dbReference type="InterPro" id="IPR002026">
    <property type="entry name" value="Urease_gamma/gamma-beta_su"/>
</dbReference>
<dbReference type="InterPro" id="IPR036463">
    <property type="entry name" value="Urease_gamma_sf"/>
</dbReference>
<dbReference type="InterPro" id="IPR050069">
    <property type="entry name" value="Urease_subunit"/>
</dbReference>
<dbReference type="NCBIfam" id="NF009712">
    <property type="entry name" value="PRK13241.1"/>
    <property type="match status" value="1"/>
</dbReference>
<dbReference type="NCBIfam" id="TIGR00193">
    <property type="entry name" value="urease_gam"/>
    <property type="match status" value="1"/>
</dbReference>
<dbReference type="PANTHER" id="PTHR33569">
    <property type="entry name" value="UREASE"/>
    <property type="match status" value="1"/>
</dbReference>
<dbReference type="PANTHER" id="PTHR33569:SF1">
    <property type="entry name" value="UREASE"/>
    <property type="match status" value="1"/>
</dbReference>
<dbReference type="Pfam" id="PF00547">
    <property type="entry name" value="Urease_gamma"/>
    <property type="match status" value="1"/>
</dbReference>
<dbReference type="PIRSF" id="PIRSF001223">
    <property type="entry name" value="Urease_gamma"/>
    <property type="match status" value="1"/>
</dbReference>
<dbReference type="SUPFAM" id="SSF54111">
    <property type="entry name" value="Urease, gamma-subunit"/>
    <property type="match status" value="1"/>
</dbReference>
<keyword id="KW-0963">Cytoplasm</keyword>
<keyword id="KW-0378">Hydrolase</keyword>
<keyword id="KW-1185">Reference proteome</keyword>
<proteinExistence type="inferred from homology"/>
<accession>Q8XAG2</accession>
<sequence length="100" mass="11085">MELTPREKDKLLLFTAALLAERRLARGLKLNYPESVALISAFIMEGARDGKSVAALMEEGRHVLSREQVMEGIPEMIPDIQVEATFPDGSKLVTVHNPII</sequence>
<protein>
    <recommendedName>
        <fullName evidence="1">Urease subunit gamma</fullName>
        <ecNumber evidence="1">3.5.1.5</ecNumber>
    </recommendedName>
    <alternativeName>
        <fullName evidence="1">Urea amidohydrolase subunit gamma</fullName>
    </alternativeName>
</protein>
<organism>
    <name type="scientific">Escherichia coli O157:H7</name>
    <dbReference type="NCBI Taxonomy" id="83334"/>
    <lineage>
        <taxon>Bacteria</taxon>
        <taxon>Pseudomonadati</taxon>
        <taxon>Pseudomonadota</taxon>
        <taxon>Gammaproteobacteria</taxon>
        <taxon>Enterobacterales</taxon>
        <taxon>Enterobacteriaceae</taxon>
        <taxon>Escherichia</taxon>
    </lineage>
</organism>
<reference key="1">
    <citation type="journal article" date="2001" name="Nature">
        <title>Genome sequence of enterohaemorrhagic Escherichia coli O157:H7.</title>
        <authorList>
            <person name="Perna N.T."/>
            <person name="Plunkett G. III"/>
            <person name="Burland V."/>
            <person name="Mau B."/>
            <person name="Glasner J.D."/>
            <person name="Rose D.J."/>
            <person name="Mayhew G.F."/>
            <person name="Evans P.S."/>
            <person name="Gregor J."/>
            <person name="Kirkpatrick H.A."/>
            <person name="Posfai G."/>
            <person name="Hackett J."/>
            <person name="Klink S."/>
            <person name="Boutin A."/>
            <person name="Shao Y."/>
            <person name="Miller L."/>
            <person name="Grotbeck E.J."/>
            <person name="Davis N.W."/>
            <person name="Lim A."/>
            <person name="Dimalanta E.T."/>
            <person name="Potamousis K."/>
            <person name="Apodaca J."/>
            <person name="Anantharaman T.S."/>
            <person name="Lin J."/>
            <person name="Yen G."/>
            <person name="Schwartz D.C."/>
            <person name="Welch R.A."/>
            <person name="Blattner F.R."/>
        </authorList>
    </citation>
    <scope>NUCLEOTIDE SEQUENCE [LARGE SCALE GENOMIC DNA]</scope>
    <source>
        <strain>O157:H7 / EDL933 / ATCC 700927 / EHEC</strain>
    </source>
</reference>
<reference key="2">
    <citation type="journal article" date="2001" name="DNA Res.">
        <title>Complete genome sequence of enterohemorrhagic Escherichia coli O157:H7 and genomic comparison with a laboratory strain K-12.</title>
        <authorList>
            <person name="Hayashi T."/>
            <person name="Makino K."/>
            <person name="Ohnishi M."/>
            <person name="Kurokawa K."/>
            <person name="Ishii K."/>
            <person name="Yokoyama K."/>
            <person name="Han C.-G."/>
            <person name="Ohtsubo E."/>
            <person name="Nakayama K."/>
            <person name="Murata T."/>
            <person name="Tanaka M."/>
            <person name="Tobe T."/>
            <person name="Iida T."/>
            <person name="Takami H."/>
            <person name="Honda T."/>
            <person name="Sasakawa C."/>
            <person name="Ogasawara N."/>
            <person name="Yasunaga T."/>
            <person name="Kuhara S."/>
            <person name="Shiba T."/>
            <person name="Hattori M."/>
            <person name="Shinagawa H."/>
        </authorList>
    </citation>
    <scope>NUCLEOTIDE SEQUENCE [LARGE SCALE GENOMIC DNA]</scope>
    <source>
        <strain>O157:H7 / Sakai / RIMD 0509952 / EHEC</strain>
    </source>
</reference>
<reference key="3">
    <citation type="journal article" date="2004" name="Microbiology">
        <title>Urease activity of enterohaemorrhagic Escherichia coli depends on a specific one-base substitution in ureD.</title>
        <authorList>
            <person name="Nakano M."/>
            <person name="Iida T."/>
            <person name="Honda T."/>
        </authorList>
    </citation>
    <scope>ABSENCE OF UREASE</scope>
    <source>
        <strain>O157:H7 / Sakai / RIMD 0509952 / EHEC</strain>
    </source>
</reference>
<comment type="catalytic activity">
    <reaction evidence="1">
        <text>urea + 2 H2O + H(+) = hydrogencarbonate + 2 NH4(+)</text>
        <dbReference type="Rhea" id="RHEA:20557"/>
        <dbReference type="ChEBI" id="CHEBI:15377"/>
        <dbReference type="ChEBI" id="CHEBI:15378"/>
        <dbReference type="ChEBI" id="CHEBI:16199"/>
        <dbReference type="ChEBI" id="CHEBI:17544"/>
        <dbReference type="ChEBI" id="CHEBI:28938"/>
        <dbReference type="EC" id="3.5.1.5"/>
    </reaction>
</comment>
<comment type="pathway">
    <text evidence="1">Nitrogen metabolism; urea degradation; CO(2) and NH(3) from urea (urease route): step 1/1.</text>
</comment>
<comment type="subunit">
    <text evidence="1">Heterotrimer of UreA (gamma), UreB (beta) and UreC (alpha) subunits. Three heterotrimers associate to form the active enzyme.</text>
</comment>
<comment type="subcellular location">
    <subcellularLocation>
        <location evidence="1">Cytoplasm</location>
    </subcellularLocation>
</comment>
<comment type="similarity">
    <text evidence="1">Belongs to the urease gamma subunit family.</text>
</comment>
<comment type="caution">
    <text evidence="2">Neither O157 strain expresses urease due to a truncation of ureD, the last gene of the probable operon. Urease activity is restored in O157 / Sakai upon complementation with wild-type ureD.</text>
</comment>
<comment type="caution">
    <text evidence="2">This region of the chromosome is duplicated in strain O157:H7 / EDL933 but not in O157:H7 / Sakai.</text>
</comment>